<gene>
    <name evidence="21" type="primary">MORC2</name>
    <name type="synonym">KIAA0852</name>
    <name type="synonym">ZCWCC1</name>
</gene>
<accession>Q9Y6X9</accession>
<accession>B2RNB1</accession>
<accession>Q9UF28</accession>
<accession>Q9Y6V2</accession>
<keyword id="KW-0002">3D-structure</keyword>
<keyword id="KW-0007">Acetylation</keyword>
<keyword id="KW-0025">Alternative splicing</keyword>
<keyword id="KW-0067">ATP-binding</keyword>
<keyword id="KW-0144">Charcot-Marie-Tooth disease</keyword>
<keyword id="KW-0158">Chromosome</keyword>
<keyword id="KW-0175">Coiled coil</keyword>
<keyword id="KW-0963">Cytoplasm</keyword>
<keyword id="KW-0225">Disease variant</keyword>
<keyword id="KW-0242">Dwarfism</keyword>
<keyword id="KW-0276">Fatty acid metabolism</keyword>
<keyword id="KW-0378">Hydrolase</keyword>
<keyword id="KW-0991">Intellectual disability</keyword>
<keyword id="KW-1017">Isopeptide bond</keyword>
<keyword id="KW-0443">Lipid metabolism</keyword>
<keyword id="KW-0460">Magnesium</keyword>
<keyword id="KW-0479">Metal-binding</keyword>
<keyword id="KW-0523">Neurodegeneration</keyword>
<keyword id="KW-0622">Neuropathy</keyword>
<keyword id="KW-0547">Nucleotide-binding</keyword>
<keyword id="KW-0539">Nucleus</keyword>
<keyword id="KW-0597">Phosphoprotein</keyword>
<keyword id="KW-1267">Proteomics identification</keyword>
<keyword id="KW-1185">Reference proteome</keyword>
<keyword id="KW-0832">Ubl conjugation</keyword>
<keyword id="KW-0862">Zinc</keyword>
<keyword id="KW-0863">Zinc-finger</keyword>
<evidence type="ECO:0000255" key="1"/>
<evidence type="ECO:0000255" key="2">
    <source>
        <dbReference type="PROSITE-ProRule" id="PRU00454"/>
    </source>
</evidence>
<evidence type="ECO:0000256" key="3">
    <source>
        <dbReference type="SAM" id="MobiDB-lite"/>
    </source>
</evidence>
<evidence type="ECO:0000269" key="4">
    <source>
    </source>
</evidence>
<evidence type="ECO:0000269" key="5">
    <source>
    </source>
</evidence>
<evidence type="ECO:0000269" key="6">
    <source>
    </source>
</evidence>
<evidence type="ECO:0000269" key="7">
    <source>
    </source>
</evidence>
<evidence type="ECO:0000269" key="8">
    <source>
    </source>
</evidence>
<evidence type="ECO:0000269" key="9">
    <source>
    </source>
</evidence>
<evidence type="ECO:0000269" key="10">
    <source>
    </source>
</evidence>
<evidence type="ECO:0000269" key="11">
    <source>
    </source>
</evidence>
<evidence type="ECO:0000269" key="12">
    <source>
    </source>
</evidence>
<evidence type="ECO:0000269" key="13">
    <source>
    </source>
</evidence>
<evidence type="ECO:0000269" key="14">
    <source>
    </source>
</evidence>
<evidence type="ECO:0000269" key="15">
    <source>
    </source>
</evidence>
<evidence type="ECO:0000269" key="16">
    <source>
    </source>
</evidence>
<evidence type="ECO:0000269" key="17">
    <source>
    </source>
</evidence>
<evidence type="ECO:0000303" key="18">
    <source>
    </source>
</evidence>
<evidence type="ECO:0000303" key="19">
    <source>
    </source>
</evidence>
<evidence type="ECO:0000305" key="20"/>
<evidence type="ECO:0000312" key="21">
    <source>
        <dbReference type="HGNC" id="HGNC:23573"/>
    </source>
</evidence>
<evidence type="ECO:0007744" key="22">
    <source>
        <dbReference type="PDB" id="5OF9"/>
    </source>
</evidence>
<evidence type="ECO:0007744" key="23">
    <source>
        <dbReference type="PDB" id="5OFA"/>
    </source>
</evidence>
<evidence type="ECO:0007744" key="24">
    <source>
        <dbReference type="PDB" id="5OFB"/>
    </source>
</evidence>
<evidence type="ECO:0007744" key="25">
    <source>
    </source>
</evidence>
<evidence type="ECO:0007744" key="26">
    <source>
    </source>
</evidence>
<evidence type="ECO:0007744" key="27">
    <source>
    </source>
</evidence>
<evidence type="ECO:0007744" key="28">
    <source>
    </source>
</evidence>
<evidence type="ECO:0007744" key="29">
    <source>
    </source>
</evidence>
<evidence type="ECO:0007744" key="30">
    <source>
    </source>
</evidence>
<evidence type="ECO:0007744" key="31">
    <source>
    </source>
</evidence>
<evidence type="ECO:0007744" key="32">
    <source>
    </source>
</evidence>
<evidence type="ECO:0007744" key="33">
    <source>
    </source>
</evidence>
<evidence type="ECO:0007744" key="34">
    <source>
    </source>
</evidence>
<evidence type="ECO:0007744" key="35">
    <source>
    </source>
</evidence>
<evidence type="ECO:0007829" key="36">
    <source>
        <dbReference type="PDB" id="5OF9"/>
    </source>
</evidence>
<evidence type="ECO:0007829" key="37">
    <source>
        <dbReference type="PDB" id="5OFA"/>
    </source>
</evidence>
<evidence type="ECO:0007829" key="38">
    <source>
        <dbReference type="PDB" id="5OFB"/>
    </source>
</evidence>
<protein>
    <recommendedName>
        <fullName evidence="20">ATPase MORC2</fullName>
        <ecNumber evidence="6 13 16">3.6.1.-</ecNumber>
    </recommendedName>
    <alternativeName>
        <fullName evidence="20">MORC family CW-type zinc finger protein 2</fullName>
    </alternativeName>
    <alternativeName>
        <fullName>Zinc finger CW-type coiled-coil domain protein 1</fullName>
    </alternativeName>
</protein>
<name>MORC2_HUMAN</name>
<comment type="function">
    <text evidence="4 5 6 7 13 15 16 17">Essential for epigenetic silencing by the HUSH (human silencing hub) complex. Recruited by HUSH to target site in heterochromatin, the ATPase activity and homodimerization are critical for HUSH-mediated silencing (PubMed:28581500, PubMed:29440755, PubMed:32693025). Represses germ cell-related genes and L1 retrotransposons in collaboration with SETDB1 and the HUSH complex, the silencing is dependent of repressive epigenetic modifications, such as H3K9me3 mark. Silencing events often occur within introns of transcriptionally active genes, and lead to the down-regulation of host gene expression (PubMed:29211708). During DNA damage response, regulates chromatin remodeling through ATP hydrolysis. Upon DNA damage, is phosphorylated by PAK1, both colocalize to chromatin and induce H2AX expression. ATPase activity is required and dependent of phosphorylation by PAK1 and presence of DNA (PubMed:23260667). Recruits histone deacetylases, such as HDAC4, to promoter regions, causing local histone H3 deacetylation and transcriptional repression of genes such as CA9 (PubMed:20110259, PubMed:20225202). Exhibits a cytosolic function in lipogenesis, adipogenic differentiation, and lipid homeostasis by increasing the activity of ACLY, possibly preventing its dephosphorylation (PubMed:24286864).</text>
</comment>
<comment type="catalytic activity">
    <reaction evidence="6 13 16">
        <text>ATP + H2O = ADP + phosphate + H(+)</text>
        <dbReference type="Rhea" id="RHEA:13065"/>
        <dbReference type="ChEBI" id="CHEBI:15377"/>
        <dbReference type="ChEBI" id="CHEBI:15378"/>
        <dbReference type="ChEBI" id="CHEBI:30616"/>
        <dbReference type="ChEBI" id="CHEBI:43474"/>
        <dbReference type="ChEBI" id="CHEBI:456216"/>
    </reaction>
    <physiologicalReaction direction="left-to-right" evidence="6">
        <dbReference type="Rhea" id="RHEA:13066"/>
    </physiologicalReaction>
</comment>
<comment type="activity regulation">
    <text evidence="6">ATPase activity is dependent of phosphorylation by PAK1 and presence of DNA.</text>
</comment>
<comment type="subunit">
    <text evidence="4 7 13 16">Homodimerizes upon ATP-binding and dissociate upon ATP hydrolysis; homodimerization is required for gene silencing (PubMed:29440755). Interacts with HDAC4 (PubMed:20110259). Interacts with ACLY (PubMed:24286864). Interacts with TASOR and MPHOSPH8; the interactions associate MORC2 with the HUSH complex which recruits MORC2 to heterochromatic loci (PubMed:28581500).</text>
</comment>
<comment type="interaction">
    <interactant intactId="EBI-11125700">
        <id>Q9Y6X9</id>
    </interactant>
    <interactant intactId="EBI-21786832">
        <id>Q86VD1</id>
        <label>MORC1</label>
    </interactant>
    <organismsDiffer>false</organismsDiffer>
    <experiments>3</experiments>
</comment>
<comment type="interaction">
    <interactant intactId="EBI-26959886">
        <id>Q9Y6X9-1</id>
    </interactant>
    <interactant intactId="EBI-26959886">
        <id>Q9Y6X9-1</id>
        <label>MORC2</label>
    </interactant>
    <organismsDiffer>false</organismsDiffer>
    <experiments>2</experiments>
</comment>
<comment type="subcellular location">
    <subcellularLocation>
        <location evidence="5 6 13">Nucleus</location>
    </subcellularLocation>
    <subcellularLocation>
        <location evidence="5 7">Cytoplasm</location>
        <location evidence="5 7">Cytosol</location>
    </subcellularLocation>
    <subcellularLocation>
        <location evidence="6 13">Chromosome</location>
    </subcellularLocation>
    <subcellularLocation>
        <location evidence="6">Nucleus matrix</location>
    </subcellularLocation>
    <text evidence="5 6">Mainly located in the nucleus (PubMed:20225202). Upon phosphorylation at Ser-739, recruited to damaged chromatin (PubMed:23260667).</text>
</comment>
<comment type="alternative products">
    <event type="alternative splicing"/>
    <isoform>
        <id>Q9Y6X9-1</id>
        <name>1</name>
        <sequence type="displayed"/>
    </isoform>
    <isoform>
        <id>Q9Y6X9-2</id>
        <name>2</name>
        <sequence type="described" ref="VSP_041759"/>
    </isoform>
</comment>
<comment type="tissue specificity">
    <text>Highly expressed in smooth muscle, pancreas and testis.</text>
</comment>
<comment type="PTM">
    <text evidence="6">Phosphorylated by PAK1 at Ser-739 upon DNA damage. Phosphorylation is required for ATPase activity and recruitment to damaged chromatin.</text>
</comment>
<comment type="disease" evidence="8 9 10 13 14 16 17">
    <disease id="DI-04590">
        <name>Charcot-Marie-Tooth disease, axonal, type 2Z</name>
        <acronym>CMT2Z</acronym>
        <description>An autosomal dominant, axonal form of Charcot-Marie-Tooth disease, a disorder of the peripheral nervous system, characterized by progressive weakness and atrophy, initially of the peroneal muscles and later of the distal muscles of the arms. Charcot-Marie-Tooth disease is classified in two main groups on the basis of electrophysiologic properties and histopathology: primary peripheral demyelinating neuropathies (designated CMT1 when they are dominantly inherited) and primary peripheral axonal neuropathies (CMT2). Neuropathies of the CMT2 group are characterized by signs of axonal degeneration in the absence of obvious myelin alterations, normal or slightly reduced nerve conduction velocities, and progressive distal muscle weakness and atrophy.</description>
        <dbReference type="MIM" id="616688"/>
    </disease>
    <text>The disease is caused by variants affecting the gene represented in this entry.</text>
</comment>
<comment type="disease" evidence="17">
    <disease id="DI-06005">
        <name>Developmental delay, impaired growth, dysmorphic facies, and axonal neuropathy</name>
        <acronym>DIGFAN</acronym>
        <description>An autosomal dominant disease characterized by developmental delay, intellectual disability, hypotonia, poor growth, short stature, microcephaly, and variable craniofacial dysmorphism. Patients often present weakness, hyporeflexia, and electrophysiologic abnormalities consistent with an axonal sensorimotor peripheral neuropathy. Additional features may include hearing loss, pigmentary retinopathy, and abnormalities on brain imaging, including cerebral or cerebellar atrophy, hypomyelination, and lesions in the basal ganglia or brainstem. Disease severity is highly variable.</description>
        <dbReference type="MIM" id="619090"/>
    </disease>
    <text>The disease is caused by variants affecting the gene represented in this entry.</text>
</comment>
<comment type="sequence caution" evidence="20">
    <conflict type="erroneous gene model prediction">
        <sequence resource="EMBL-CDS" id="AAC12954"/>
    </conflict>
</comment>
<comment type="sequence caution" evidence="20">
    <conflict type="miscellaneous discrepancy">
        <sequence resource="EMBL-CDS" id="BAA74875"/>
    </conflict>
    <text>Intron retention.</text>
</comment>
<dbReference type="EC" id="3.6.1.-" evidence="6 13 16"/>
<dbReference type="EMBL" id="AB020659">
    <property type="protein sequence ID" value="BAA74875.2"/>
    <property type="status" value="ALT_SEQ"/>
    <property type="molecule type" value="mRNA"/>
</dbReference>
<dbReference type="EMBL" id="CR456469">
    <property type="protein sequence ID" value="CAG30355.1"/>
    <property type="molecule type" value="mRNA"/>
</dbReference>
<dbReference type="EMBL" id="AC004542">
    <property type="protein sequence ID" value="AAC12954.1"/>
    <property type="status" value="ALT_SEQ"/>
    <property type="molecule type" value="Genomic_DNA"/>
</dbReference>
<dbReference type="EMBL" id="AL133637">
    <property type="protein sequence ID" value="CAB63760.1"/>
    <property type="molecule type" value="mRNA"/>
</dbReference>
<dbReference type="EMBL" id="CH471095">
    <property type="protein sequence ID" value="EAW59921.1"/>
    <property type="molecule type" value="Genomic_DNA"/>
</dbReference>
<dbReference type="EMBL" id="BC019257">
    <property type="protein sequence ID" value="AAH19257.3"/>
    <property type="molecule type" value="mRNA"/>
</dbReference>
<dbReference type="EMBL" id="BC136782">
    <property type="protein sequence ID" value="AAI36783.1"/>
    <property type="molecule type" value="mRNA"/>
</dbReference>
<dbReference type="CCDS" id="CCDS33636.1">
    <molecule id="Q9Y6X9-2"/>
</dbReference>
<dbReference type="CCDS" id="CCDS77668.1">
    <molecule id="Q9Y6X9-1"/>
</dbReference>
<dbReference type="PIR" id="T02436">
    <property type="entry name" value="T02436"/>
</dbReference>
<dbReference type="PIR" id="T43455">
    <property type="entry name" value="T43455"/>
</dbReference>
<dbReference type="RefSeq" id="NP_001290185.1">
    <molecule id="Q9Y6X9-1"/>
    <property type="nucleotide sequence ID" value="NM_001303256.3"/>
</dbReference>
<dbReference type="RefSeq" id="NP_001290186.1">
    <property type="nucleotide sequence ID" value="NM_001303257.2"/>
</dbReference>
<dbReference type="RefSeq" id="NP_055756.1">
    <molecule id="Q9Y6X9-2"/>
    <property type="nucleotide sequence ID" value="NM_014941.3"/>
</dbReference>
<dbReference type="RefSeq" id="XP_016884157.1">
    <property type="nucleotide sequence ID" value="XM_017028668.1"/>
</dbReference>
<dbReference type="RefSeq" id="XP_047297159.1">
    <molecule id="Q9Y6X9-2"/>
    <property type="nucleotide sequence ID" value="XM_047441203.1"/>
</dbReference>
<dbReference type="RefSeq" id="XP_047297160.1">
    <molecule id="Q9Y6X9-2"/>
    <property type="nucleotide sequence ID" value="XM_047441204.1"/>
</dbReference>
<dbReference type="RefSeq" id="XP_054181252.1">
    <molecule id="Q9Y6X9-2"/>
    <property type="nucleotide sequence ID" value="XM_054325277.1"/>
</dbReference>
<dbReference type="RefSeq" id="XP_054181253.1">
    <molecule id="Q9Y6X9-2"/>
    <property type="nucleotide sequence ID" value="XM_054325278.1"/>
</dbReference>
<dbReference type="PDB" id="5OF9">
    <property type="method" value="X-ray"/>
    <property type="resolution" value="1.81 A"/>
    <property type="chains" value="A/B=1-603"/>
</dbReference>
<dbReference type="PDB" id="5OFA">
    <property type="method" value="X-ray"/>
    <property type="resolution" value="2.57 A"/>
    <property type="chains" value="A/B=1-603"/>
</dbReference>
<dbReference type="PDB" id="5OFB">
    <property type="method" value="X-ray"/>
    <property type="resolution" value="2.02 A"/>
    <property type="chains" value="A/B=1-603"/>
</dbReference>
<dbReference type="PDBsum" id="5OF9"/>
<dbReference type="PDBsum" id="5OFA"/>
<dbReference type="PDBsum" id="5OFB"/>
<dbReference type="SMR" id="Q9Y6X9"/>
<dbReference type="BioGRID" id="116547">
    <property type="interactions" value="96"/>
</dbReference>
<dbReference type="FunCoup" id="Q9Y6X9">
    <property type="interactions" value="3982"/>
</dbReference>
<dbReference type="IntAct" id="Q9Y6X9">
    <property type="interactions" value="34"/>
</dbReference>
<dbReference type="MINT" id="Q9Y6X9"/>
<dbReference type="STRING" id="9606.ENSP00000380763"/>
<dbReference type="GlyGen" id="Q9Y6X9">
    <property type="glycosylation" value="7 sites, 1 O-linked glycan (7 sites)"/>
</dbReference>
<dbReference type="iPTMnet" id="Q9Y6X9"/>
<dbReference type="PhosphoSitePlus" id="Q9Y6X9"/>
<dbReference type="SwissPalm" id="Q9Y6X9"/>
<dbReference type="BioMuta" id="MORC2"/>
<dbReference type="DMDM" id="114152840"/>
<dbReference type="jPOST" id="Q9Y6X9"/>
<dbReference type="MassIVE" id="Q9Y6X9"/>
<dbReference type="PaxDb" id="9606-ENSP00000215862"/>
<dbReference type="PeptideAtlas" id="Q9Y6X9"/>
<dbReference type="ProteomicsDB" id="86822">
    <molecule id="Q9Y6X9-1"/>
</dbReference>
<dbReference type="ProteomicsDB" id="86823">
    <molecule id="Q9Y6X9-2"/>
</dbReference>
<dbReference type="Pumba" id="Q9Y6X9"/>
<dbReference type="Antibodypedia" id="235">
    <property type="antibodies" value="136 antibodies from 18 providers"/>
</dbReference>
<dbReference type="DNASU" id="22880"/>
<dbReference type="Ensembl" id="ENST00000215862.8">
    <molecule id="Q9Y6X9-2"/>
    <property type="protein sequence ID" value="ENSP00000215862.4"/>
    <property type="gene ID" value="ENSG00000133422.14"/>
</dbReference>
<dbReference type="Ensembl" id="ENST00000397641.8">
    <molecule id="Q9Y6X9-1"/>
    <property type="protein sequence ID" value="ENSP00000380763.2"/>
    <property type="gene ID" value="ENSG00000133422.14"/>
</dbReference>
<dbReference type="GeneID" id="22880"/>
<dbReference type="KEGG" id="hsa:22880"/>
<dbReference type="MANE-Select" id="ENST00000397641.8">
    <property type="protein sequence ID" value="ENSP00000380763.2"/>
    <property type="RefSeq nucleotide sequence ID" value="NM_001303256.3"/>
    <property type="RefSeq protein sequence ID" value="NP_001290185.1"/>
</dbReference>
<dbReference type="UCSC" id="uc003aje.2">
    <molecule id="Q9Y6X9-1"/>
    <property type="organism name" value="human"/>
</dbReference>
<dbReference type="AGR" id="HGNC:23573"/>
<dbReference type="CTD" id="22880"/>
<dbReference type="DisGeNET" id="22880"/>
<dbReference type="GeneCards" id="MORC2"/>
<dbReference type="GeneReviews" id="MORC2"/>
<dbReference type="HGNC" id="HGNC:23573">
    <property type="gene designation" value="MORC2"/>
</dbReference>
<dbReference type="HPA" id="ENSG00000133422">
    <property type="expression patterns" value="Low tissue specificity"/>
</dbReference>
<dbReference type="MalaCards" id="MORC2"/>
<dbReference type="MIM" id="616661">
    <property type="type" value="gene"/>
</dbReference>
<dbReference type="MIM" id="616688">
    <property type="type" value="phenotype"/>
</dbReference>
<dbReference type="MIM" id="619090">
    <property type="type" value="phenotype"/>
</dbReference>
<dbReference type="neXtProt" id="NX_Q9Y6X9"/>
<dbReference type="OpenTargets" id="ENSG00000133422"/>
<dbReference type="Orphanet" id="466768">
    <property type="disease" value="Autosomal dominant Charcot-Marie-Tooth disease type 2Z"/>
</dbReference>
<dbReference type="PharmGKB" id="PA134986990"/>
<dbReference type="VEuPathDB" id="HostDB:ENSG00000133422"/>
<dbReference type="eggNOG" id="KOG1845">
    <property type="taxonomic scope" value="Eukaryota"/>
</dbReference>
<dbReference type="GeneTree" id="ENSGT00940000153998"/>
<dbReference type="HOGENOM" id="CLU_011516_0_0_1"/>
<dbReference type="InParanoid" id="Q9Y6X9"/>
<dbReference type="OMA" id="NFASKTF"/>
<dbReference type="OrthoDB" id="10251809at2759"/>
<dbReference type="PAN-GO" id="Q9Y6X9">
    <property type="GO annotations" value="1 GO annotation based on evolutionary models"/>
</dbReference>
<dbReference type="PhylomeDB" id="Q9Y6X9"/>
<dbReference type="TreeFam" id="TF329118"/>
<dbReference type="PathwayCommons" id="Q9Y6X9"/>
<dbReference type="Reactome" id="R-HSA-75105">
    <property type="pathway name" value="Fatty acyl-CoA biosynthesis"/>
</dbReference>
<dbReference type="Reactome" id="R-HSA-9843970">
    <property type="pathway name" value="Regulation of endogenous retroelements by the Human Silencing Hub (HUSH) complex"/>
</dbReference>
<dbReference type="SignaLink" id="Q9Y6X9"/>
<dbReference type="SIGNOR" id="Q9Y6X9"/>
<dbReference type="BioGRID-ORCS" id="22880">
    <property type="hits" value="32 hits in 1163 CRISPR screens"/>
</dbReference>
<dbReference type="ChiTaRS" id="MORC2">
    <property type="organism name" value="human"/>
</dbReference>
<dbReference type="GeneWiki" id="MORC2"/>
<dbReference type="GenomeRNAi" id="22880"/>
<dbReference type="Pharos" id="Q9Y6X9">
    <property type="development level" value="Tbio"/>
</dbReference>
<dbReference type="PRO" id="PR:Q9Y6X9"/>
<dbReference type="Proteomes" id="UP000005640">
    <property type="component" value="Chromosome 22"/>
</dbReference>
<dbReference type="RNAct" id="Q9Y6X9">
    <property type="molecule type" value="protein"/>
</dbReference>
<dbReference type="Bgee" id="ENSG00000133422">
    <property type="expression patterns" value="Expressed in cervix squamous epithelium and 207 other cell types or tissues"/>
</dbReference>
<dbReference type="ExpressionAtlas" id="Q9Y6X9">
    <property type="expression patterns" value="baseline and differential"/>
</dbReference>
<dbReference type="GO" id="GO:0005737">
    <property type="term" value="C:cytoplasm"/>
    <property type="evidence" value="ECO:0000314"/>
    <property type="project" value="UniProtKB"/>
</dbReference>
<dbReference type="GO" id="GO:0005829">
    <property type="term" value="C:cytosol"/>
    <property type="evidence" value="ECO:0000314"/>
    <property type="project" value="HPA"/>
</dbReference>
<dbReference type="GO" id="GO:0000792">
    <property type="term" value="C:heterochromatin"/>
    <property type="evidence" value="ECO:0000314"/>
    <property type="project" value="UniProtKB"/>
</dbReference>
<dbReference type="GO" id="GO:0016363">
    <property type="term" value="C:nuclear matrix"/>
    <property type="evidence" value="ECO:0000314"/>
    <property type="project" value="UniProtKB"/>
</dbReference>
<dbReference type="GO" id="GO:0005654">
    <property type="term" value="C:nucleoplasm"/>
    <property type="evidence" value="ECO:0000314"/>
    <property type="project" value="HPA"/>
</dbReference>
<dbReference type="GO" id="GO:0005634">
    <property type="term" value="C:nucleus"/>
    <property type="evidence" value="ECO:0000314"/>
    <property type="project" value="UniProtKB"/>
</dbReference>
<dbReference type="GO" id="GO:0005524">
    <property type="term" value="F:ATP binding"/>
    <property type="evidence" value="ECO:0000314"/>
    <property type="project" value="UniProtKB"/>
</dbReference>
<dbReference type="GO" id="GO:0016887">
    <property type="term" value="F:ATP hydrolysis activity"/>
    <property type="evidence" value="ECO:0000314"/>
    <property type="project" value="UniProtKB"/>
</dbReference>
<dbReference type="GO" id="GO:0003682">
    <property type="term" value="F:chromatin binding"/>
    <property type="evidence" value="ECO:0000314"/>
    <property type="project" value="UniProtKB"/>
</dbReference>
<dbReference type="GO" id="GO:0042802">
    <property type="term" value="F:identical protein binding"/>
    <property type="evidence" value="ECO:0000353"/>
    <property type="project" value="IntAct"/>
</dbReference>
<dbReference type="GO" id="GO:0000287">
    <property type="term" value="F:magnesium ion binding"/>
    <property type="evidence" value="ECO:0000314"/>
    <property type="project" value="UniProtKB"/>
</dbReference>
<dbReference type="GO" id="GO:0042803">
    <property type="term" value="F:protein homodimerization activity"/>
    <property type="evidence" value="ECO:0000314"/>
    <property type="project" value="UniProtKB"/>
</dbReference>
<dbReference type="GO" id="GO:0008270">
    <property type="term" value="F:zinc ion binding"/>
    <property type="evidence" value="ECO:0000314"/>
    <property type="project" value="UniProtKB"/>
</dbReference>
<dbReference type="GO" id="GO:0006338">
    <property type="term" value="P:chromatin remodeling"/>
    <property type="evidence" value="ECO:0000314"/>
    <property type="project" value="UniProtKB"/>
</dbReference>
<dbReference type="GO" id="GO:0140719">
    <property type="term" value="P:constitutive heterochromatin formation"/>
    <property type="evidence" value="ECO:0000314"/>
    <property type="project" value="UniProtKB"/>
</dbReference>
<dbReference type="GO" id="GO:0006974">
    <property type="term" value="P:DNA damage response"/>
    <property type="evidence" value="ECO:0000314"/>
    <property type="project" value="UniProtKB"/>
</dbReference>
<dbReference type="GO" id="GO:0006631">
    <property type="term" value="P:fatty acid metabolic process"/>
    <property type="evidence" value="ECO:0007669"/>
    <property type="project" value="UniProtKB-KW"/>
</dbReference>
<dbReference type="GO" id="GO:0141005">
    <property type="term" value="P:transposable element silencing by heterochromatin formation"/>
    <property type="evidence" value="ECO:0000314"/>
    <property type="project" value="UniProtKB"/>
</dbReference>
<dbReference type="CDD" id="cd16931">
    <property type="entry name" value="HATPase_MORC-like"/>
    <property type="match status" value="1"/>
</dbReference>
<dbReference type="FunFam" id="3.30.40.100:FF:000001">
    <property type="entry name" value="MORC family CW-type zinc finger protein 2"/>
    <property type="match status" value="1"/>
</dbReference>
<dbReference type="FunFam" id="3.30.565.10:FF:000027">
    <property type="entry name" value="MORC family CW-type zinc finger protein 2"/>
    <property type="match status" value="1"/>
</dbReference>
<dbReference type="Gene3D" id="3.30.40.100">
    <property type="match status" value="1"/>
</dbReference>
<dbReference type="Gene3D" id="3.30.565.10">
    <property type="entry name" value="Histidine kinase-like ATPase, C-terminal domain"/>
    <property type="match status" value="1"/>
</dbReference>
<dbReference type="InterPro" id="IPR056360">
    <property type="entry name" value="Chromo_MORC2_6th"/>
</dbReference>
<dbReference type="InterPro" id="IPR036890">
    <property type="entry name" value="HATPase_C_sf"/>
</dbReference>
<dbReference type="InterPro" id="IPR041006">
    <property type="entry name" value="Morc_S5"/>
</dbReference>
<dbReference type="InterPro" id="IPR011124">
    <property type="entry name" value="Znf_CW"/>
</dbReference>
<dbReference type="PANTHER" id="PTHR23337:SF7">
    <property type="entry name" value="ATPASE MORC2"/>
    <property type="match status" value="1"/>
</dbReference>
<dbReference type="PANTHER" id="PTHR23337">
    <property type="entry name" value="ZINC FINGER CW-TYPE COILED-COIL DOMAIN PROTEIN 1"/>
    <property type="match status" value="1"/>
</dbReference>
<dbReference type="Pfam" id="PF23327">
    <property type="entry name" value="Chromo_MORC2_6th"/>
    <property type="match status" value="1"/>
</dbReference>
<dbReference type="Pfam" id="PF13589">
    <property type="entry name" value="HATPase_c_3"/>
    <property type="match status" value="1"/>
</dbReference>
<dbReference type="Pfam" id="PF17942">
    <property type="entry name" value="Morc6_S5"/>
    <property type="match status" value="1"/>
</dbReference>
<dbReference type="Pfam" id="PF07496">
    <property type="entry name" value="zf-CW"/>
    <property type="match status" value="1"/>
</dbReference>
<dbReference type="SUPFAM" id="SSF55874">
    <property type="entry name" value="ATPase domain of HSP90 chaperone/DNA topoisomerase II/histidine kinase"/>
    <property type="match status" value="1"/>
</dbReference>
<dbReference type="PROSITE" id="PS51050">
    <property type="entry name" value="ZF_CW"/>
    <property type="match status" value="1"/>
</dbReference>
<feature type="initiator methionine" description="Removed" evidence="30 31">
    <location>
        <position position="1"/>
    </location>
</feature>
<feature type="chain" id="PRO_0000096537" description="ATPase MORC2">
    <location>
        <begin position="2"/>
        <end position="1032"/>
    </location>
</feature>
<feature type="zinc finger region" description="CW-type" evidence="2 16">
    <location>
        <begin position="490"/>
        <end position="544"/>
    </location>
</feature>
<feature type="region of interest" description="Disordered" evidence="3">
    <location>
        <begin position="530"/>
        <end position="563"/>
    </location>
</feature>
<feature type="region of interest" description="Disordered" evidence="3">
    <location>
        <begin position="577"/>
        <end position="793"/>
    </location>
</feature>
<feature type="region of interest" description="Disordered" evidence="3">
    <location>
        <begin position="850"/>
        <end position="870"/>
    </location>
</feature>
<feature type="coiled-coil region" evidence="1">
    <location>
        <begin position="282"/>
        <end position="362"/>
    </location>
</feature>
<feature type="coiled-coil region" evidence="1">
    <location>
        <begin position="547"/>
        <end position="584"/>
    </location>
</feature>
<feature type="coiled-coil region" evidence="1">
    <location>
        <begin position="741"/>
        <end position="761"/>
    </location>
</feature>
<feature type="coiled-coil region" evidence="1">
    <location>
        <begin position="966"/>
        <end position="1016"/>
    </location>
</feature>
<feature type="compositionally biased region" description="Basic and acidic residues" evidence="3">
    <location>
        <begin position="532"/>
        <end position="543"/>
    </location>
</feature>
<feature type="compositionally biased region" description="Basic and acidic residues" evidence="3">
    <location>
        <begin position="550"/>
        <end position="563"/>
    </location>
</feature>
<feature type="compositionally biased region" description="Pro residues" evidence="3">
    <location>
        <begin position="627"/>
        <end position="638"/>
    </location>
</feature>
<feature type="compositionally biased region" description="Low complexity" evidence="3">
    <location>
        <begin position="690"/>
        <end position="704"/>
    </location>
</feature>
<feature type="compositionally biased region" description="Low complexity" evidence="3">
    <location>
        <begin position="711"/>
        <end position="720"/>
    </location>
</feature>
<feature type="compositionally biased region" description="Basic and acidic residues" evidence="3">
    <location>
        <begin position="765"/>
        <end position="774"/>
    </location>
</feature>
<feature type="binding site" evidence="16">
    <location>
        <position position="39"/>
    </location>
    <ligand>
        <name>ATP</name>
        <dbReference type="ChEBI" id="CHEBI:30616"/>
    </ligand>
</feature>
<feature type="binding site" evidence="16">
    <location>
        <position position="39"/>
    </location>
    <ligand>
        <name>Mg(2+)</name>
        <dbReference type="ChEBI" id="CHEBI:18420"/>
    </ligand>
</feature>
<feature type="binding site" evidence="16">
    <location>
        <begin position="87"/>
        <end position="89"/>
    </location>
    <ligand>
        <name>ATP</name>
        <dbReference type="ChEBI" id="CHEBI:30616"/>
    </ligand>
</feature>
<feature type="binding site" evidence="16">
    <location>
        <begin position="99"/>
        <end position="105"/>
    </location>
    <ligand>
        <name>ATP</name>
        <dbReference type="ChEBI" id="CHEBI:30616"/>
    </ligand>
</feature>
<feature type="binding site" evidence="16">
    <location>
        <position position="427"/>
    </location>
    <ligand>
        <name>ATP</name>
        <dbReference type="ChEBI" id="CHEBI:30616"/>
    </ligand>
</feature>
<feature type="binding site" evidence="2">
    <location>
        <position position="499"/>
    </location>
    <ligand>
        <name>Zn(2+)</name>
        <dbReference type="ChEBI" id="CHEBI:29105"/>
    </ligand>
</feature>
<feature type="binding site" evidence="2">
    <location>
        <position position="502"/>
    </location>
    <ligand>
        <name>Zn(2+)</name>
        <dbReference type="ChEBI" id="CHEBI:29105"/>
    </ligand>
</feature>
<feature type="binding site" evidence="2">
    <location>
        <position position="525"/>
    </location>
    <ligand>
        <name>Zn(2+)</name>
        <dbReference type="ChEBI" id="CHEBI:29105"/>
    </ligand>
</feature>
<feature type="binding site" evidence="2">
    <location>
        <position position="536"/>
    </location>
    <ligand>
        <name>Zn(2+)</name>
        <dbReference type="ChEBI" id="CHEBI:29105"/>
    </ligand>
</feature>
<feature type="modified residue" description="N-acetylalanine" evidence="30 31">
    <location>
        <position position="2"/>
    </location>
</feature>
<feature type="modified residue" description="Phosphothreonine" evidence="32">
    <location>
        <position position="582"/>
    </location>
</feature>
<feature type="modified residue" description="Phosphoserine" evidence="32">
    <location>
        <position position="602"/>
    </location>
</feature>
<feature type="modified residue" description="Phosphoserine" evidence="25 28 29 32 33">
    <location>
        <position position="615"/>
    </location>
</feature>
<feature type="modified residue" description="Phosphoserine" evidence="26 32">
    <location>
        <position position="696"/>
    </location>
</feature>
<feature type="modified residue" description="Phosphoserine" evidence="26 32">
    <location>
        <position position="705"/>
    </location>
</feature>
<feature type="modified residue" description="Phosphoserine" evidence="26 32">
    <location>
        <position position="725"/>
    </location>
</feature>
<feature type="modified residue" description="Phosphoserine" evidence="26 32">
    <location>
        <position position="730"/>
    </location>
</feature>
<feature type="modified residue" description="Phosphothreonine" evidence="26 32">
    <location>
        <position position="733"/>
    </location>
</feature>
<feature type="modified residue" description="Phosphoserine; by PAK1" evidence="6 27 29 32">
    <location>
        <position position="739"/>
    </location>
</feature>
<feature type="modified residue" description="Phosphoserine" evidence="27 28 29 32">
    <location>
        <position position="743"/>
    </location>
</feature>
<feature type="modified residue" description="Phosphoserine" evidence="26 28 29 32">
    <location>
        <position position="777"/>
    </location>
</feature>
<feature type="modified residue" description="Phosphoserine" evidence="26 28 29 32">
    <location>
        <position position="779"/>
    </location>
</feature>
<feature type="cross-link" description="Glycyl lysine isopeptide (Lys-Gly) (interchain with G-Cter in SUMO2)" evidence="35">
    <location>
        <position position="652"/>
    </location>
</feature>
<feature type="cross-link" description="Glycyl lysine isopeptide (Lys-Gly) (interchain with G-Cter in SUMO2)" evidence="35">
    <location>
        <position position="704"/>
    </location>
</feature>
<feature type="cross-link" description="Glycyl lysine isopeptide (Lys-Gly) (interchain with G-Cter in SUMO2)" evidence="35">
    <location>
        <position position="716"/>
    </location>
</feature>
<feature type="cross-link" description="Glycyl lysine isopeptide (Lys-Gly) (interchain with G-Cter in SUMO2)" evidence="34 35">
    <location>
        <position position="767"/>
    </location>
</feature>
<feature type="cross-link" description="Glycyl lysine isopeptide (Lys-Gly) (interchain with G-Cter in SUMO2)" evidence="35">
    <location>
        <position position="819"/>
    </location>
</feature>
<feature type="cross-link" description="Glycyl lysine isopeptide (Lys-Gly) (interchain with G-Cter in SUMO2)" evidence="35">
    <location>
        <position position="932"/>
    </location>
</feature>
<feature type="splice variant" id="VSP_041759" description="In isoform 2." evidence="18 19">
    <location>
        <begin position="1"/>
        <end position="62"/>
    </location>
</feature>
<feature type="sequence variant" id="VAR_085367" description="In DIGFAN; increases HUSH-dependent gene silencing; dbSNP:rs1602510214." evidence="17">
    <original>T</original>
    <variation>I</variation>
    <location>
        <position position="24"/>
    </location>
</feature>
<feature type="sequence variant" id="VAR_085368" description="In DIGFAN; increases HUSH-dependent gene silencing; dbSNP:rs1602510200." evidence="17">
    <original>E</original>
    <variation>K</variation>
    <location>
        <position position="27"/>
    </location>
</feature>
<feature type="sequence variant" id="VAR_076454" description="In CMT2Z and DIGFAN; decreased ATPase activity; ATP-independent homodimerization; increases HUSH-dependent gene silencing; dbSNP:rs864309504." evidence="8 16 17">
    <original>S</original>
    <variation>L</variation>
    <location>
        <position position="87"/>
    </location>
</feature>
<feature type="sequence variant" id="VAR_085369" description="In DIGFAN; dbSNP:rs1602499659." evidence="17">
    <original>A</original>
    <variation>V</variation>
    <location>
        <position position="88"/>
    </location>
</feature>
<feature type="sequence variant" id="VAR_076455" description="In CMT2Z; uncertain significance; dbSNP:rs749060708." evidence="9">
    <original>Q</original>
    <variation>E</variation>
    <location>
        <position position="96"/>
    </location>
</feature>
<feature type="sequence variant" id="VAR_085370" description="In DIGFAN; increases HUSH-dependent gene silencing; dbSNP:rs1064795559." evidence="17">
    <original>R</original>
    <variation>C</variation>
    <location>
        <position position="132"/>
    </location>
</feature>
<feature type="sequence variant" id="VAR_085371" description="In dbSNP:rs186458188." evidence="10">
    <original>E</original>
    <variation>D</variation>
    <location>
        <position position="163"/>
    </location>
</feature>
<feature type="sequence variant" id="VAR_085372" description="In dbSNP:rs76273991." evidence="10 14">
    <original>N</original>
    <variation>S</variation>
    <location>
        <position position="209"/>
    </location>
</feature>
<feature type="sequence variant" id="VAR_085373" description="In dbSNP:rs774960940." evidence="14">
    <original>T</original>
    <variation>M</variation>
    <location>
        <position position="228"/>
    </location>
</feature>
<feature type="sequence variant" id="VAR_076456" description="In CMT2Z; increases HUSH-dependent gene silencing; dbSNP:rs886037934." evidence="9 17">
    <original>E</original>
    <variation>G</variation>
    <location>
        <position position="236"/>
    </location>
</feature>
<feature type="sequence variant" id="VAR_076457" description="In dbSNP:rs1355363942." evidence="9">
    <original>Y</original>
    <variation>C</variation>
    <location>
        <position position="248"/>
    </location>
</feature>
<feature type="sequence variant" id="VAR_076458" description="In CMT2Z; slightly decreased ATPase activity; increases HUSH-dependent gene silencing; dbSNP:rs864309503." evidence="8 9 13 14 16 17">
    <original>R</original>
    <variation>W</variation>
    <location>
        <position position="252"/>
    </location>
</feature>
<feature type="sequence variant" id="VAR_085374" description="In DIGFAN; increases HUSH-dependent gene silencing; dbSNP:rs1064796495." evidence="17">
    <original>R</original>
    <variation>S</variation>
    <location>
        <position position="266"/>
    </location>
</feature>
<feature type="sequence variant" id="VAR_076459" description="In dbSNP:rs1482880426." evidence="9">
    <original>R</original>
    <variation>H</variation>
    <location>
        <position position="283"/>
    </location>
</feature>
<feature type="sequence variant" id="VAR_085375" description="In DIGFAN; dbSNP:rs1602485958." evidence="17">
    <original>S</original>
    <variation>R</variation>
    <location>
        <position position="388"/>
    </location>
</feature>
<feature type="sequence variant" id="VAR_085376" description="In DIGFAN and CMT2Z; dbSNP:rs1555938796." evidence="14 17">
    <original>Y</original>
    <variation>C</variation>
    <location>
        <position position="394"/>
    </location>
</feature>
<feature type="sequence variant" id="VAR_085377" description="In CMT2Z." evidence="10 14">
    <original>Q</original>
    <variation>R</variation>
    <location>
        <position position="400"/>
    </location>
</feature>
<feature type="sequence variant" id="VAR_085378" description="In CMT2Z; dbSNP:rs1555938741." evidence="14">
    <original>C</original>
    <variation>Y</variation>
    <location>
        <position position="407"/>
    </location>
</feature>
<feature type="sequence variant" id="VAR_085379" description="In DIGFAN; increases HUSH-dependent gene silencing; dbSNP:rs1602485677." evidence="17">
    <original>V</original>
    <variation>F</variation>
    <location>
        <position position="413"/>
    </location>
</feature>
<feature type="sequence variant" id="VAR_081260" description="Found in early-onset spinal muscular atrophy-like disease with cerebellar atrophy, cerebellar ataxia and diaphragmatic paralysis; likely pathogenic; increased ATPase activity; increased rate of dimer assembly and disassembly; decreased HUSH-dependent gene silencing." evidence="11 12 16">
    <original>T</original>
    <variation>R</variation>
    <location>
        <position position="424"/>
    </location>
</feature>
<feature type="sequence variant" id="VAR_085380" description="In CMT2Z; dbSNP:rs2040679845." evidence="14">
    <original>A</original>
    <variation>V</variation>
    <location>
        <position position="431"/>
    </location>
</feature>
<feature type="sequence variant" id="VAR_076460" description="In CMT2Z; uncertain significance." evidence="9">
    <original>G</original>
    <variation>R</variation>
    <location>
        <position position="444"/>
    </location>
</feature>
<feature type="sequence variant" id="VAR_076461" evidence="9">
    <original>D</original>
    <variation>H</variation>
    <location>
        <position position="466"/>
    </location>
</feature>
<feature type="sequence variant" id="VAR_085381" description="In CMT2Z; uncertain significance." evidence="10">
    <original>D</original>
    <variation>N</variation>
    <location>
        <position position="466"/>
    </location>
</feature>
<feature type="sequence variant" id="VAR_076462" description="In dbSNP:rs548292999." evidence="9">
    <original>R</original>
    <variation>C</variation>
    <location>
        <position position="585"/>
    </location>
</feature>
<feature type="sequence variant" id="VAR_076463" description="In dbSNP:rs774444542." evidence="9">
    <original>E</original>
    <variation>G</variation>
    <location>
        <position position="757"/>
    </location>
</feature>
<feature type="sequence variant" id="VAR_085382" description="In CMT2Z; uncertain significance; dbSNP:rs1236354994." evidence="10">
    <original>H</original>
    <variation>R</variation>
    <location>
        <position position="798"/>
    </location>
</feature>
<feature type="sequence variant" id="VAR_085383" description="In dbSNP:rs759328437." evidence="14">
    <original>E</original>
    <variation>K</variation>
    <location>
        <position position="906"/>
    </location>
</feature>
<feature type="mutagenesis site" description="Abolishes homodimerization. No effect on ATPase activity. Loss of HUSH-dependent gene silencing." evidence="16">
    <original>Y</original>
    <variation>A</variation>
    <location>
        <position position="18"/>
    </location>
</feature>
<feature type="mutagenesis site" description="Loss of ATP-binding and ATPase activity. Does not homodimerizes. Seems to abolish chromatin compaction." evidence="13 16">
    <original>N</original>
    <variation>A</variation>
    <location>
        <position position="39"/>
    </location>
</feature>
<feature type="mutagenesis site" description="Loss of ATP-binding and ATPase activity. Loss of binding to ATP and ATPase activity; when associated with A-69. Prevents chromatin remodeling." evidence="6 13">
    <original>D</original>
    <variation>A</variation>
    <location>
        <position position="68"/>
    </location>
</feature>
<feature type="mutagenesis site" description="No effect on binding to ATP and ATPase activity; when associated with A-68." evidence="6">
    <original>D</original>
    <variation>A</variation>
    <location>
        <position position="69"/>
    </location>
</feature>
<feature type="mutagenesis site" description="Increases HUSH-dependent gene silencing." evidence="16">
    <original>R</original>
    <variation>A</variation>
    <location>
        <position position="266"/>
    </location>
</feature>
<feature type="mutagenesis site" description="No effect on HUSH-dependent gene silencing." evidence="16">
    <original>R</original>
    <variation>E</variation>
    <location>
        <position position="319"/>
    </location>
</feature>
<feature type="mutagenesis site" description="Loss of HUSH-dependent gene silencing. Decreases dsDNA-binding affinity; when associated with E-329 and E-333." evidence="16">
    <original>R</original>
    <variation>E</variation>
    <location>
        <position position="326"/>
    </location>
</feature>
<feature type="mutagenesis site" description="Loss of HUSH-dependent gene silencing. Decreases dsDNA-binding affinity; when associated with E-326 and E-333." evidence="16">
    <original>R</original>
    <variation>E</variation>
    <location>
        <position position="329"/>
    </location>
</feature>
<feature type="mutagenesis site" description="Loss of HUSH-dependent gene silencing. Decreases dsDNA-binding affinity; when associated with E-326 and E-329." evidence="16">
    <original>R</original>
    <variation>E</variation>
    <location>
        <position position="333"/>
    </location>
</feature>
<feature type="mutagenesis site" description="No effect on HUSH-dependent gene silencing." evidence="16">
    <original>R</original>
    <variation>E</variation>
    <location>
        <position position="344"/>
    </location>
</feature>
<feature type="mutagenesis site" description="No effect on HUSH-dependent gene silencing." evidence="16">
    <original>R</original>
    <variation>E</variation>
    <location>
        <position position="351"/>
    </location>
</feature>
<feature type="mutagenesis site" description="No effect on HUSH-dependent gene silencing." evidence="16">
    <original>R</original>
    <variation>E</variation>
    <location>
        <position position="358"/>
    </location>
</feature>
<feature type="mutagenesis site" description="No effect on phosphorylation by PAK1." evidence="6">
    <original>S</original>
    <variation>A</variation>
    <location>
        <position position="725"/>
    </location>
</feature>
<feature type="mutagenesis site" description="No effect on phosphorylation by PAK1." evidence="6">
    <original>S</original>
    <variation>A</variation>
    <location>
        <position position="730"/>
    </location>
</feature>
<feature type="mutagenesis site" description="Abolishes phosphorylation by PAK1. Not recruited on damaged chromatin. Loss of ATPase activity. Prevents chromatin remodeling. Upon irradiation, increases levels of damaged DNA." evidence="6">
    <original>S</original>
    <variation>A</variation>
    <location>
        <position position="739"/>
    </location>
</feature>
<feature type="mutagenesis site" description="No effect on phosphorylation by PAK1." evidence="6">
    <original>S</original>
    <variation>A</variation>
    <location>
        <position position="773"/>
    </location>
</feature>
<feature type="helix" evidence="36">
    <location>
        <begin position="17"/>
        <end position="23"/>
    </location>
</feature>
<feature type="helix" evidence="36">
    <location>
        <begin position="29"/>
        <end position="42"/>
    </location>
</feature>
<feature type="strand" evidence="36">
    <location>
        <begin position="46"/>
        <end position="54"/>
    </location>
</feature>
<feature type="strand" evidence="36">
    <location>
        <begin position="61"/>
        <end position="68"/>
    </location>
</feature>
<feature type="helix" evidence="36">
    <location>
        <begin position="75"/>
        <end position="80"/>
    </location>
</feature>
<feature type="strand" evidence="38">
    <location>
        <begin position="83"/>
        <end position="85"/>
    </location>
</feature>
<feature type="helix" evidence="36">
    <location>
        <begin position="103"/>
        <end position="111"/>
    </location>
</feature>
<feature type="strand" evidence="36">
    <location>
        <begin position="112"/>
        <end position="121"/>
    </location>
</feature>
<feature type="strand" evidence="36">
    <location>
        <begin position="124"/>
        <end position="131"/>
    </location>
</feature>
<feature type="helix" evidence="36">
    <location>
        <begin position="132"/>
        <end position="138"/>
    </location>
</feature>
<feature type="strand" evidence="36">
    <location>
        <begin position="149"/>
        <end position="151"/>
    </location>
</feature>
<feature type="turn" evidence="36">
    <location>
        <begin position="152"/>
        <end position="154"/>
    </location>
</feature>
<feature type="helix" evidence="36">
    <location>
        <begin position="162"/>
        <end position="175"/>
    </location>
</feature>
<feature type="helix" evidence="36">
    <location>
        <begin position="181"/>
        <end position="189"/>
    </location>
</feature>
<feature type="strand" evidence="36">
    <location>
        <begin position="193"/>
        <end position="204"/>
    </location>
</feature>
<feature type="strand" evidence="36">
    <location>
        <begin position="212"/>
        <end position="215"/>
    </location>
</feature>
<feature type="strand" evidence="36">
    <location>
        <begin position="217"/>
        <end position="219"/>
    </location>
</feature>
<feature type="strand" evidence="36">
    <location>
        <begin position="224"/>
        <end position="227"/>
    </location>
</feature>
<feature type="helix" evidence="36">
    <location>
        <begin position="235"/>
        <end position="237"/>
    </location>
</feature>
<feature type="helix" evidence="36">
    <location>
        <begin position="240"/>
        <end position="246"/>
    </location>
</feature>
<feature type="strand" evidence="36">
    <location>
        <begin position="247"/>
        <end position="250"/>
    </location>
</feature>
<feature type="strand" evidence="36">
    <location>
        <begin position="253"/>
        <end position="257"/>
    </location>
</feature>
<feature type="helix" evidence="36">
    <location>
        <begin position="267"/>
        <end position="269"/>
    </location>
</feature>
<feature type="strand" evidence="36">
    <location>
        <begin position="270"/>
        <end position="280"/>
    </location>
</feature>
<feature type="helix" evidence="36">
    <location>
        <begin position="282"/>
        <end position="320"/>
    </location>
</feature>
<feature type="helix" evidence="36">
    <location>
        <begin position="331"/>
        <end position="361"/>
    </location>
</feature>
<feature type="strand" evidence="36">
    <location>
        <begin position="365"/>
        <end position="372"/>
    </location>
</feature>
<feature type="strand" evidence="36">
    <location>
        <begin position="381"/>
        <end position="386"/>
    </location>
</feature>
<feature type="strand" evidence="36">
    <location>
        <begin position="389"/>
        <end position="395"/>
    </location>
</feature>
<feature type="helix" evidence="36">
    <location>
        <begin position="398"/>
        <end position="401"/>
    </location>
</feature>
<feature type="strand" evidence="36">
    <location>
        <begin position="402"/>
        <end position="405"/>
    </location>
</feature>
<feature type="turn" evidence="36">
    <location>
        <begin position="406"/>
        <end position="409"/>
    </location>
</feature>
<feature type="strand" evidence="36">
    <location>
        <begin position="410"/>
        <end position="416"/>
    </location>
</feature>
<feature type="turn" evidence="36">
    <location>
        <begin position="418"/>
        <end position="420"/>
    </location>
</feature>
<feature type="strand" evidence="36">
    <location>
        <begin position="427"/>
        <end position="431"/>
    </location>
</feature>
<feature type="helix" evidence="36">
    <location>
        <begin position="433"/>
        <end position="454"/>
    </location>
</feature>
<feature type="helix" evidence="36">
    <location>
        <begin position="456"/>
        <end position="459"/>
    </location>
</feature>
<feature type="helix" evidence="36">
    <location>
        <begin position="461"/>
        <end position="467"/>
    </location>
</feature>
<feature type="strand" evidence="36">
    <location>
        <begin position="472"/>
        <end position="474"/>
    </location>
</feature>
<feature type="helix" evidence="36">
    <location>
        <begin position="483"/>
        <end position="490"/>
    </location>
</feature>
<feature type="strand" evidence="36">
    <location>
        <begin position="495"/>
        <end position="498"/>
    </location>
</feature>
<feature type="turn" evidence="36">
    <location>
        <begin position="500"/>
        <end position="502"/>
    </location>
</feature>
<feature type="strand" evidence="36">
    <location>
        <begin position="505"/>
        <end position="510"/>
    </location>
</feature>
<feature type="turn" evidence="37">
    <location>
        <begin position="512"/>
        <end position="514"/>
    </location>
</feature>
<feature type="helix" evidence="36">
    <location>
        <begin position="525"/>
        <end position="527"/>
    </location>
</feature>
<feature type="helix" evidence="37">
    <location>
        <begin position="531"/>
        <end position="533"/>
    </location>
</feature>
<sequence>MAFTNYSSLNRAQLTFEYLHTNSTTHEFLFGALAELVDNARDADATRIDIYAERREDLRGGFMLCFLDDGAGMDPSDAASVIQFGKSAKRTPESTQIGQYGNGLKSGSMRIGKDFILFTKKEDTMTCLFLSRTFHEEEGIDEVIVPLPTWNARTREPVTDNVEKFAIETELIYKYSPFRTEEEVMTQFMKIPGDSGTLVIIFNLKLMDNGEPELDIISNPRDIQMAETSPEGTKPERRSFRAYAAVLYIDPRMRIFIHGHKVQTKRLSCCLYKPRMYKYTSSRFKTRAEQEVKKAEHVARIAEEKAREAESKARTLEVRLGGDLTRDSRVMLRQVQNRAITLRREADVKKRIKEAKQRALKEPKELNFVFGVNIEHRDLDGMFIYNCSRLIKMYEKVGPQLEGGMACGGVVGVVDVPYLVLEPTHNKQDFADAKEYRHLLRAMGEHLAQYWKDIAIAQRGIIKFWDEFGYLSANWNQPPSSELRYKRRRAMEIPTTIQCDLCLKWRTLPFQLSSVEKDYPDTWVCSMNPDPEQDRCEASEQKQKVPLGTFRKDMKTQEEKQKQLTEKIRQQQEKLEALQKTTPIRSQADLKKLPLEVTTRPSTEEPVRRPQRPRSPPLPAVIRNAPSRPPSLPTPRPASQPRKAPVISSTPKLPALAAREEASTSRLLQPPEAPRKPANTLVKTASRPAPLVQQLSPSLLPNSKSPREVPSPKVIKTPVVKKTESPIKLSPATPSRKRSVAVSDEEEVEEEAERRKERCKRGRFVVKEEKKDSNELSDSAGEEDSADLKRAQKDKGLHVEVRVNREWYTGRVTAVEVGKHVVRWKVKFDYVPTDTTPRDRWVEKGSEDVRLMKPPSPEHQSLDTQQEGGEEEVGPVAQQAIAVAEPSTSECLRIEPDTTALSTNHETIDLLVQILRNCLRYFLPPSFPISKKQLSAMNSDELISFPLKEYFKQYEVGLQNLCNSYQSRADSRAKASEESLRTSERKLRETEEKLQKLRTNIVALLQKVQEDIDINTDDELDAYIEDLITKGD</sequence>
<reference key="1">
    <citation type="journal article" date="1998" name="DNA Res.">
        <title>Prediction of the coding sequences of unidentified human genes. XII. The complete sequences of 100 new cDNA clones from brain which code for large proteins in vitro.</title>
        <authorList>
            <person name="Nagase T."/>
            <person name="Ishikawa K."/>
            <person name="Suyama M."/>
            <person name="Kikuno R."/>
            <person name="Hirosawa M."/>
            <person name="Miyajima N."/>
            <person name="Tanaka A."/>
            <person name="Kotani H."/>
            <person name="Nomura N."/>
            <person name="Ohara O."/>
        </authorList>
    </citation>
    <scope>NUCLEOTIDE SEQUENCE [LARGE SCALE MRNA] (ISOFORM 1)</scope>
    <source>
        <tissue>Brain</tissue>
    </source>
</reference>
<reference key="2">
    <citation type="journal article" date="2004" name="Genome Biol.">
        <title>A genome annotation-driven approach to cloning the human ORFeome.</title>
        <authorList>
            <person name="Collins J.E."/>
            <person name="Wright C.L."/>
            <person name="Edwards C.A."/>
            <person name="Davis M.P."/>
            <person name="Grinham J.A."/>
            <person name="Cole C.G."/>
            <person name="Goward M.E."/>
            <person name="Aguado B."/>
            <person name="Mallya M."/>
            <person name="Mokrab Y."/>
            <person name="Huckle E.J."/>
            <person name="Beare D.M."/>
            <person name="Dunham I."/>
        </authorList>
    </citation>
    <scope>NUCLEOTIDE SEQUENCE [LARGE SCALE MRNA] (ISOFORM 2)</scope>
</reference>
<reference key="3">
    <citation type="journal article" date="1999" name="Nature">
        <title>The DNA sequence of human chromosome 22.</title>
        <authorList>
            <person name="Dunham I."/>
            <person name="Hunt A.R."/>
            <person name="Collins J.E."/>
            <person name="Bruskiewich R."/>
            <person name="Beare D.M."/>
            <person name="Clamp M."/>
            <person name="Smink L.J."/>
            <person name="Ainscough R."/>
            <person name="Almeida J.P."/>
            <person name="Babbage A.K."/>
            <person name="Bagguley C."/>
            <person name="Bailey J."/>
            <person name="Barlow K.F."/>
            <person name="Bates K.N."/>
            <person name="Beasley O.P."/>
            <person name="Bird C.P."/>
            <person name="Blakey S.E."/>
            <person name="Bridgeman A.M."/>
            <person name="Buck D."/>
            <person name="Burgess J."/>
            <person name="Burrill W.D."/>
            <person name="Burton J."/>
            <person name="Carder C."/>
            <person name="Carter N.P."/>
            <person name="Chen Y."/>
            <person name="Clark G."/>
            <person name="Clegg S.M."/>
            <person name="Cobley V.E."/>
            <person name="Cole C.G."/>
            <person name="Collier R.E."/>
            <person name="Connor R."/>
            <person name="Conroy D."/>
            <person name="Corby N.R."/>
            <person name="Coville G.J."/>
            <person name="Cox A.V."/>
            <person name="Davis J."/>
            <person name="Dawson E."/>
            <person name="Dhami P.D."/>
            <person name="Dockree C."/>
            <person name="Dodsworth S.J."/>
            <person name="Durbin R.M."/>
            <person name="Ellington A.G."/>
            <person name="Evans K.L."/>
            <person name="Fey J.M."/>
            <person name="Fleming K."/>
            <person name="French L."/>
            <person name="Garner A.A."/>
            <person name="Gilbert J.G.R."/>
            <person name="Goward M.E."/>
            <person name="Grafham D.V."/>
            <person name="Griffiths M.N.D."/>
            <person name="Hall C."/>
            <person name="Hall R.E."/>
            <person name="Hall-Tamlyn G."/>
            <person name="Heathcott R.W."/>
            <person name="Ho S."/>
            <person name="Holmes S."/>
            <person name="Hunt S.E."/>
            <person name="Jones M.C."/>
            <person name="Kershaw J."/>
            <person name="Kimberley A.M."/>
            <person name="King A."/>
            <person name="Laird G.K."/>
            <person name="Langford C.F."/>
            <person name="Leversha M.A."/>
            <person name="Lloyd C."/>
            <person name="Lloyd D.M."/>
            <person name="Martyn I.D."/>
            <person name="Mashreghi-Mohammadi M."/>
            <person name="Matthews L.H."/>
            <person name="Mccann O.T."/>
            <person name="Mcclay J."/>
            <person name="Mclaren S."/>
            <person name="McMurray A.A."/>
            <person name="Milne S.A."/>
            <person name="Mortimore B.J."/>
            <person name="Odell C.N."/>
            <person name="Pavitt R."/>
            <person name="Pearce A.V."/>
            <person name="Pearson D."/>
            <person name="Phillimore B.J.C.T."/>
            <person name="Phillips S.H."/>
            <person name="Plumb R.W."/>
            <person name="Ramsay H."/>
            <person name="Ramsey Y."/>
            <person name="Rogers L."/>
            <person name="Ross M.T."/>
            <person name="Scott C.E."/>
            <person name="Sehra H.K."/>
            <person name="Skuce C.D."/>
            <person name="Smalley S."/>
            <person name="Smith M.L."/>
            <person name="Soderlund C."/>
            <person name="Spragon L."/>
            <person name="Steward C.A."/>
            <person name="Sulston J.E."/>
            <person name="Swann R.M."/>
            <person name="Vaudin M."/>
            <person name="Wall M."/>
            <person name="Wallis J.M."/>
            <person name="Whiteley M.N."/>
            <person name="Willey D.L."/>
            <person name="Williams L."/>
            <person name="Williams S.A."/>
            <person name="Williamson H."/>
            <person name="Wilmer T.E."/>
            <person name="Wilming L."/>
            <person name="Wright C.L."/>
            <person name="Hubbard T."/>
            <person name="Bentley D.R."/>
            <person name="Beck S."/>
            <person name="Rogers J."/>
            <person name="Shimizu N."/>
            <person name="Minoshima S."/>
            <person name="Kawasaki K."/>
            <person name="Sasaki T."/>
            <person name="Asakawa S."/>
            <person name="Kudoh J."/>
            <person name="Shintani A."/>
            <person name="Shibuya K."/>
            <person name="Yoshizaki Y."/>
            <person name="Aoki N."/>
            <person name="Mitsuyama S."/>
            <person name="Roe B.A."/>
            <person name="Chen F."/>
            <person name="Chu L."/>
            <person name="Crabtree J."/>
            <person name="Deschamps S."/>
            <person name="Do A."/>
            <person name="Do T."/>
            <person name="Dorman A."/>
            <person name="Fang F."/>
            <person name="Fu Y."/>
            <person name="Hu P."/>
            <person name="Hua A."/>
            <person name="Kenton S."/>
            <person name="Lai H."/>
            <person name="Lao H.I."/>
            <person name="Lewis J."/>
            <person name="Lewis S."/>
            <person name="Lin S.-P."/>
            <person name="Loh P."/>
            <person name="Malaj E."/>
            <person name="Nguyen T."/>
            <person name="Pan H."/>
            <person name="Phan S."/>
            <person name="Qi S."/>
            <person name="Qian Y."/>
            <person name="Ray L."/>
            <person name="Ren Q."/>
            <person name="Shaull S."/>
            <person name="Sloan D."/>
            <person name="Song L."/>
            <person name="Wang Q."/>
            <person name="Wang Y."/>
            <person name="Wang Z."/>
            <person name="White J."/>
            <person name="Willingham D."/>
            <person name="Wu H."/>
            <person name="Yao Z."/>
            <person name="Zhan M."/>
            <person name="Zhang G."/>
            <person name="Chissoe S."/>
            <person name="Murray J."/>
            <person name="Miller N."/>
            <person name="Minx P."/>
            <person name="Fulton R."/>
            <person name="Johnson D."/>
            <person name="Bemis G."/>
            <person name="Bentley D."/>
            <person name="Bradshaw H."/>
            <person name="Bourne S."/>
            <person name="Cordes M."/>
            <person name="Du Z."/>
            <person name="Fulton L."/>
            <person name="Goela D."/>
            <person name="Graves T."/>
            <person name="Hawkins J."/>
            <person name="Hinds K."/>
            <person name="Kemp K."/>
            <person name="Latreille P."/>
            <person name="Layman D."/>
            <person name="Ozersky P."/>
            <person name="Rohlfing T."/>
            <person name="Scheet P."/>
            <person name="Walker C."/>
            <person name="Wamsley A."/>
            <person name="Wohldmann P."/>
            <person name="Pepin K."/>
            <person name="Nelson J."/>
            <person name="Korf I."/>
            <person name="Bedell J.A."/>
            <person name="Hillier L.W."/>
            <person name="Mardis E."/>
            <person name="Waterston R."/>
            <person name="Wilson R."/>
            <person name="Emanuel B.S."/>
            <person name="Shaikh T."/>
            <person name="Kurahashi H."/>
            <person name="Saitta S."/>
            <person name="Budarf M.L."/>
            <person name="McDermid H.E."/>
            <person name="Johnson A."/>
            <person name="Wong A.C.C."/>
            <person name="Morrow B.E."/>
            <person name="Edelmann L."/>
            <person name="Kim U.J."/>
            <person name="Shizuya H."/>
            <person name="Simon M.I."/>
            <person name="Dumanski J.P."/>
            <person name="Peyrard M."/>
            <person name="Kedra D."/>
            <person name="Seroussi E."/>
            <person name="Fransson I."/>
            <person name="Tapia I."/>
            <person name="Bruder C.E."/>
            <person name="O'Brien K.P."/>
            <person name="Wilkinson P."/>
            <person name="Bodenteich A."/>
            <person name="Hartman K."/>
            <person name="Hu X."/>
            <person name="Khan A.S."/>
            <person name="Lane L."/>
            <person name="Tilahun Y."/>
            <person name="Wright H."/>
        </authorList>
    </citation>
    <scope>NUCLEOTIDE SEQUENCE [LARGE SCALE GENOMIC DNA]</scope>
</reference>
<reference key="4">
    <citation type="submission" date="2005-07" db="EMBL/GenBank/DDBJ databases">
        <authorList>
            <person name="Mural R.J."/>
            <person name="Istrail S."/>
            <person name="Sutton G.G."/>
            <person name="Florea L."/>
            <person name="Halpern A.L."/>
            <person name="Mobarry C.M."/>
            <person name="Lippert R."/>
            <person name="Walenz B."/>
            <person name="Shatkay H."/>
            <person name="Dew I."/>
            <person name="Miller J.R."/>
            <person name="Flanigan M.J."/>
            <person name="Edwards N.J."/>
            <person name="Bolanos R."/>
            <person name="Fasulo D."/>
            <person name="Halldorsson B.V."/>
            <person name="Hannenhalli S."/>
            <person name="Turner R."/>
            <person name="Yooseph S."/>
            <person name="Lu F."/>
            <person name="Nusskern D.R."/>
            <person name="Shue B.C."/>
            <person name="Zheng X.H."/>
            <person name="Zhong F."/>
            <person name="Delcher A.L."/>
            <person name="Huson D.H."/>
            <person name="Kravitz S.A."/>
            <person name="Mouchard L."/>
            <person name="Reinert K."/>
            <person name="Remington K.A."/>
            <person name="Clark A.G."/>
            <person name="Waterman M.S."/>
            <person name="Eichler E.E."/>
            <person name="Adams M.D."/>
            <person name="Hunkapiller M.W."/>
            <person name="Myers E.W."/>
            <person name="Venter J.C."/>
        </authorList>
    </citation>
    <scope>NUCLEOTIDE SEQUENCE [LARGE SCALE GENOMIC DNA]</scope>
</reference>
<reference key="5">
    <citation type="journal article" date="2004" name="Genome Res.">
        <title>The status, quality, and expansion of the NIH full-length cDNA project: the Mammalian Gene Collection (MGC).</title>
        <authorList>
            <consortium name="The MGC Project Team"/>
        </authorList>
    </citation>
    <scope>NUCLEOTIDE SEQUENCE [LARGE SCALE MRNA] (ISOFORM 2)</scope>
    <source>
        <tissue>Cerebellum</tissue>
        <tissue>Neuroblastoma</tissue>
    </source>
</reference>
<reference key="6">
    <citation type="journal article" date="2007" name="BMC Genomics">
        <title>The full-ORF clone resource of the German cDNA consortium.</title>
        <authorList>
            <person name="Bechtel S."/>
            <person name="Rosenfelder H."/>
            <person name="Duda A."/>
            <person name="Schmidt C.P."/>
            <person name="Ernst U."/>
            <person name="Wellenreuther R."/>
            <person name="Mehrle A."/>
            <person name="Schuster C."/>
            <person name="Bahr A."/>
            <person name="Bloecker H."/>
            <person name="Heubner D."/>
            <person name="Hoerlein A."/>
            <person name="Michel G."/>
            <person name="Wedler H."/>
            <person name="Koehrer K."/>
            <person name="Ottenwaelder B."/>
            <person name="Poustka A."/>
            <person name="Wiemann S."/>
            <person name="Schupp I."/>
        </authorList>
    </citation>
    <scope>NUCLEOTIDE SEQUENCE [LARGE SCALE MRNA] OF 712-1032</scope>
    <source>
        <tissue>Testis</tissue>
    </source>
</reference>
<reference key="7">
    <citation type="journal article" date="2006" name="Cell">
        <title>Global, in vivo, and site-specific phosphorylation dynamics in signaling networks.</title>
        <authorList>
            <person name="Olsen J.V."/>
            <person name="Blagoev B."/>
            <person name="Gnad F."/>
            <person name="Macek B."/>
            <person name="Kumar C."/>
            <person name="Mortensen P."/>
            <person name="Mann M."/>
        </authorList>
    </citation>
    <scope>PHOSPHORYLATION [LARGE SCALE ANALYSIS] AT SER-615</scope>
    <scope>IDENTIFICATION BY MASS SPECTROMETRY [LARGE SCALE ANALYSIS]</scope>
    <source>
        <tissue>Cervix carcinoma</tissue>
    </source>
</reference>
<reference key="8">
    <citation type="journal article" date="2008" name="Proc. Natl. Acad. Sci. U.S.A.">
        <title>A quantitative atlas of mitotic phosphorylation.</title>
        <authorList>
            <person name="Dephoure N."/>
            <person name="Zhou C."/>
            <person name="Villen J."/>
            <person name="Beausoleil S.A."/>
            <person name="Bakalarski C.E."/>
            <person name="Elledge S.J."/>
            <person name="Gygi S.P."/>
        </authorList>
    </citation>
    <scope>PHOSPHORYLATION [LARGE SCALE ANALYSIS] AT SER-696; SER-705; SER-725; SER-730; THR-733; SER-777 AND SER-779</scope>
    <scope>IDENTIFICATION BY MASS SPECTROMETRY [LARGE SCALE ANALYSIS]</scope>
    <source>
        <tissue>Cervix carcinoma</tissue>
    </source>
</reference>
<reference key="9">
    <citation type="journal article" date="2009" name="Anal. Chem.">
        <title>Lys-N and trypsin cover complementary parts of the phosphoproteome in a refined SCX-based approach.</title>
        <authorList>
            <person name="Gauci S."/>
            <person name="Helbig A.O."/>
            <person name="Slijper M."/>
            <person name="Krijgsveld J."/>
            <person name="Heck A.J."/>
            <person name="Mohammed S."/>
        </authorList>
    </citation>
    <scope>IDENTIFICATION BY MASS SPECTROMETRY [LARGE SCALE ANALYSIS]</scope>
</reference>
<reference key="10">
    <citation type="journal article" date="2009" name="Sci. Signal.">
        <title>Quantitative phosphoproteomic analysis of T cell receptor signaling reveals system-wide modulation of protein-protein interactions.</title>
        <authorList>
            <person name="Mayya V."/>
            <person name="Lundgren D.H."/>
            <person name="Hwang S.-I."/>
            <person name="Rezaul K."/>
            <person name="Wu L."/>
            <person name="Eng J.K."/>
            <person name="Rodionov V."/>
            <person name="Han D.K."/>
        </authorList>
    </citation>
    <scope>PHOSPHORYLATION [LARGE SCALE ANALYSIS] AT SER-739 AND SER-743</scope>
    <scope>IDENTIFICATION BY MASS SPECTROMETRY [LARGE SCALE ANALYSIS]</scope>
    <source>
        <tissue>Leukemic T-cell</tissue>
    </source>
</reference>
<reference key="11">
    <citation type="journal article" date="2010" name="Anat. Rec.">
        <title>Identification and expression analysis of a novel CW-type zinc finger protein MORC2 in cancer cells.</title>
        <authorList>
            <person name="Wang G.L."/>
            <person name="Wang C.Y."/>
            <person name="Cai X.Z."/>
            <person name="Chen W."/>
            <person name="Wang X.H."/>
            <person name="Li F."/>
        </authorList>
    </citation>
    <scope>FUNCTION</scope>
    <scope>SUBCELLULAR LOCATION</scope>
</reference>
<reference key="12">
    <citation type="journal article" date="2010" name="Nucleic Acids Res.">
        <title>Involvement of histone deacetylation in MORC2-mediated down-regulation of carbonic anhydrase IX.</title>
        <authorList>
            <person name="Shao Y."/>
            <person name="Li Y."/>
            <person name="Zhang J."/>
            <person name="Liu D."/>
            <person name="Liu F."/>
            <person name="Zhao Y."/>
            <person name="Shen T."/>
            <person name="Li F."/>
        </authorList>
    </citation>
    <scope>FUNCTION</scope>
    <scope>INTERACTION WITH HDAC4</scope>
</reference>
<reference key="13">
    <citation type="journal article" date="2010" name="Sci. Signal.">
        <title>Quantitative phosphoproteomics reveals widespread full phosphorylation site occupancy during mitosis.</title>
        <authorList>
            <person name="Olsen J.V."/>
            <person name="Vermeulen M."/>
            <person name="Santamaria A."/>
            <person name="Kumar C."/>
            <person name="Miller M.L."/>
            <person name="Jensen L.J."/>
            <person name="Gnad F."/>
            <person name="Cox J."/>
            <person name="Jensen T.S."/>
            <person name="Nigg E.A."/>
            <person name="Brunak S."/>
            <person name="Mann M."/>
        </authorList>
    </citation>
    <scope>PHOSPHORYLATION [LARGE SCALE ANALYSIS] AT SER-615; SER-743; SER-777 AND SER-779</scope>
    <scope>IDENTIFICATION BY MASS SPECTROMETRY [LARGE SCALE ANALYSIS]</scope>
    <source>
        <tissue>Cervix carcinoma</tissue>
    </source>
</reference>
<reference key="14">
    <citation type="journal article" date="2011" name="BMC Syst. Biol.">
        <title>Initial characterization of the human central proteome.</title>
        <authorList>
            <person name="Burkard T.R."/>
            <person name="Planyavsky M."/>
            <person name="Kaupe I."/>
            <person name="Breitwieser F.P."/>
            <person name="Buerckstuemmer T."/>
            <person name="Bennett K.L."/>
            <person name="Superti-Furga G."/>
            <person name="Colinge J."/>
        </authorList>
    </citation>
    <scope>IDENTIFICATION BY MASS SPECTROMETRY [LARGE SCALE ANALYSIS]</scope>
</reference>
<reference key="15">
    <citation type="journal article" date="2011" name="Sci. Signal.">
        <title>System-wide temporal characterization of the proteome and phosphoproteome of human embryonic stem cell differentiation.</title>
        <authorList>
            <person name="Rigbolt K.T."/>
            <person name="Prokhorova T.A."/>
            <person name="Akimov V."/>
            <person name="Henningsen J."/>
            <person name="Johansen P.T."/>
            <person name="Kratchmarova I."/>
            <person name="Kassem M."/>
            <person name="Mann M."/>
            <person name="Olsen J.V."/>
            <person name="Blagoev B."/>
        </authorList>
    </citation>
    <scope>PHOSPHORYLATION [LARGE SCALE ANALYSIS] AT SER-615; SER-739; SER-743; SER-777 AND SER-779</scope>
    <scope>IDENTIFICATION BY MASS SPECTROMETRY [LARGE SCALE ANALYSIS]</scope>
</reference>
<reference key="16">
    <citation type="journal article" date="2012" name="Cell Rep.">
        <title>MORC2 signaling integrates phosphorylation-dependent, ATPase-coupled chromatin remodeling during the DNA damage response.</title>
        <authorList>
            <person name="Li D.Q."/>
            <person name="Nair S.S."/>
            <person name="Ohshiro K."/>
            <person name="Kumar A."/>
            <person name="Nair V.S."/>
            <person name="Pakala S.B."/>
            <person name="Reddy S.D."/>
            <person name="Gajula R.P."/>
            <person name="Eswaran J."/>
            <person name="Aravind L."/>
            <person name="Kumar R."/>
        </authorList>
    </citation>
    <scope>FUNCTION</scope>
    <scope>PHOSPHORYLATION AT SER-739</scope>
    <scope>MUTAGENESIS OF ASP-68; ASP-69; SER-725; SER-730; SER-739 AND SER-773</scope>
    <scope>SUBCELLULAR LOCATION</scope>
</reference>
<reference key="17">
    <citation type="journal article" date="2012" name="Mol. Cell. Proteomics">
        <title>Comparative large-scale characterisation of plant vs. mammal proteins reveals similar and idiosyncratic N-alpha acetylation features.</title>
        <authorList>
            <person name="Bienvenut W.V."/>
            <person name="Sumpton D."/>
            <person name="Martinez A."/>
            <person name="Lilla S."/>
            <person name="Espagne C."/>
            <person name="Meinnel T."/>
            <person name="Giglione C."/>
        </authorList>
    </citation>
    <scope>ACETYLATION [LARGE SCALE ANALYSIS] AT ALA-2</scope>
    <scope>CLEAVAGE OF INITIATOR METHIONINE [LARGE SCALE ANALYSIS]</scope>
    <scope>IDENTIFICATION BY MASS SPECTROMETRY [LARGE SCALE ANALYSIS]</scope>
</reference>
<reference key="18">
    <citation type="journal article" date="2012" name="Proc. Natl. Acad. Sci. U.S.A.">
        <title>N-terminal acetylome analyses and functional insights of the N-terminal acetyltransferase NatB.</title>
        <authorList>
            <person name="Van Damme P."/>
            <person name="Lasa M."/>
            <person name="Polevoda B."/>
            <person name="Gazquez C."/>
            <person name="Elosegui-Artola A."/>
            <person name="Kim D.S."/>
            <person name="De Juan-Pardo E."/>
            <person name="Demeyer K."/>
            <person name="Hole K."/>
            <person name="Larrea E."/>
            <person name="Timmerman E."/>
            <person name="Prieto J."/>
            <person name="Arnesen T."/>
            <person name="Sherman F."/>
            <person name="Gevaert K."/>
            <person name="Aldabe R."/>
        </authorList>
    </citation>
    <scope>ACETYLATION [LARGE SCALE ANALYSIS] AT ALA-2</scope>
    <scope>CLEAVAGE OF INITIATOR METHIONINE [LARGE SCALE ANALYSIS]</scope>
    <scope>IDENTIFICATION BY MASS SPECTROMETRY [LARGE SCALE ANALYSIS]</scope>
</reference>
<reference key="19">
    <citation type="journal article" date="2013" name="J. Proteome Res.">
        <title>Toward a comprehensive characterization of a human cancer cell phosphoproteome.</title>
        <authorList>
            <person name="Zhou H."/>
            <person name="Di Palma S."/>
            <person name="Preisinger C."/>
            <person name="Peng M."/>
            <person name="Polat A.N."/>
            <person name="Heck A.J."/>
            <person name="Mohammed S."/>
        </authorList>
    </citation>
    <scope>PHOSPHORYLATION [LARGE SCALE ANALYSIS] AT THR-582; SER-602; SER-615; SER-696; SER-705; SER-725; SER-730; THR-733; SER-739; SER-743; SER-777 AND SER-779</scope>
    <scope>IDENTIFICATION BY MASS SPECTROMETRY [LARGE SCALE ANALYSIS]</scope>
    <source>
        <tissue>Cervix carcinoma</tissue>
        <tissue>Erythroleukemia</tissue>
    </source>
</reference>
<reference key="20">
    <citation type="journal article" date="2014" name="Biochim. Biophys. Acta">
        <title>Cytosolic functions of MORC2 in lipogenesis and adipogenesis.</title>
        <authorList>
            <person name="Sanchez-Solana B."/>
            <person name="Li D.Q."/>
            <person name="Kumar R."/>
        </authorList>
    </citation>
    <scope>FUNCTION IN LIPID HOMEOSTASIS</scope>
    <scope>SUBCELLULAR LOCATION</scope>
    <scope>INTERACTION WITH ACLY</scope>
</reference>
<reference key="21">
    <citation type="journal article" date="2014" name="J. Proteomics">
        <title>An enzyme assisted RP-RPLC approach for in-depth analysis of human liver phosphoproteome.</title>
        <authorList>
            <person name="Bian Y."/>
            <person name="Song C."/>
            <person name="Cheng K."/>
            <person name="Dong M."/>
            <person name="Wang F."/>
            <person name="Huang J."/>
            <person name="Sun D."/>
            <person name="Wang L."/>
            <person name="Ye M."/>
            <person name="Zou H."/>
        </authorList>
    </citation>
    <scope>PHOSPHORYLATION [LARGE SCALE ANALYSIS] AT SER-615</scope>
    <scope>IDENTIFICATION BY MASS SPECTROMETRY [LARGE SCALE ANALYSIS]</scope>
    <source>
        <tissue>Liver</tissue>
    </source>
</reference>
<reference key="22">
    <citation type="journal article" date="2014" name="Nat. Struct. Mol. Biol.">
        <title>Uncovering global SUMOylation signaling networks in a site-specific manner.</title>
        <authorList>
            <person name="Hendriks I.A."/>
            <person name="D'Souza R.C."/>
            <person name="Yang B."/>
            <person name="Verlaan-de Vries M."/>
            <person name="Mann M."/>
            <person name="Vertegaal A.C."/>
        </authorList>
    </citation>
    <scope>SUMOYLATION [LARGE SCALE ANALYSIS] AT LYS-767</scope>
    <scope>IDENTIFICATION BY MASS SPECTROMETRY [LARGE SCALE ANALYSIS]</scope>
</reference>
<reference key="23">
    <citation type="journal article" date="2017" name="Nat. Struct. Mol. Biol.">
        <title>Site-specific mapping of the human SUMO proteome reveals co-modification with phosphorylation.</title>
        <authorList>
            <person name="Hendriks I.A."/>
            <person name="Lyon D."/>
            <person name="Young C."/>
            <person name="Jensen L.J."/>
            <person name="Vertegaal A.C."/>
            <person name="Nielsen M.L."/>
        </authorList>
    </citation>
    <scope>SUMOYLATION [LARGE SCALE ANALYSIS] AT LYS-652; LYS-704; LYS-716; LYS-767; LYS-819 AND LYS-932</scope>
    <scope>IDENTIFICATION BY MASS SPECTROMETRY [LARGE SCALE ANALYSIS]</scope>
</reference>
<reference key="24">
    <citation type="journal article" date="2018" name="Nature">
        <title>Selective silencing of euchromatic L1s revealed by genome-wide screens for L1 regulators.</title>
        <authorList>
            <person name="Liu N."/>
            <person name="Lee C.H."/>
            <person name="Swigut T."/>
            <person name="Grow E."/>
            <person name="Gu B."/>
            <person name="Bassik M.C."/>
            <person name="Wysocka J."/>
        </authorList>
    </citation>
    <scope>FUNCTION</scope>
</reference>
<reference key="25">
    <citation type="journal article" date="2016" name="Ann. Neurol.">
        <title>MORC2 mutations cause axonal Charcot-Marie-Tooth disease with pyramidal signs.</title>
        <authorList>
            <person name="Albulym O.M."/>
            <person name="Kennerson M.L."/>
            <person name="Harms M.B."/>
            <person name="Drew A.P."/>
            <person name="Siddell A.H."/>
            <person name="Auer-Grumbach M."/>
            <person name="Pestronk A."/>
            <person name="Connolly A."/>
            <person name="Baloh R.H."/>
            <person name="Zuchner S."/>
            <person name="Reddel S.W."/>
            <person name="Nicholson G.A."/>
        </authorList>
    </citation>
    <scope>VARIANTS CMT2Z GLU-96; GLY-236; TRP-252 AND ARG-444</scope>
    <scope>VARIANTS CYS-248; HIS-283; HIS-466; CYS-585 AND GLY-757</scope>
</reference>
<reference key="26">
    <citation type="journal article" date="2016" name="Brain">
        <title>Mutations in the MORC2 gene cause axonal Charcot-Marie-Tooth disease.</title>
        <authorList>
            <person name="Sevilla T."/>
            <person name="Lupo V."/>
            <person name="Martinez-Rubio D."/>
            <person name="Sancho P."/>
            <person name="Sivera R."/>
            <person name="Chumillas M.J."/>
            <person name="Garcia-Romero M."/>
            <person name="Pascual-Pascual S.I."/>
            <person name="Muelas N."/>
            <person name="Dopazo J."/>
            <person name="Vilchez J.J."/>
            <person name="Palau F."/>
            <person name="Espinos C."/>
        </authorList>
    </citation>
    <scope>VARIANTS CMT2Z LEU-87 AND TRP-252</scope>
</reference>
<reference key="27">
    <citation type="journal article" date="2016" name="Brain">
        <title>MORC2 mutations in a cohort of Chinese patients with Charcot-Marie-Tooth disease type 2.</title>
        <authorList>
            <person name="Zhao X."/>
            <person name="Li X."/>
            <person name="Hu Z."/>
            <person name="Liu L."/>
            <person name="Xie Y."/>
            <person name="Tian T."/>
            <person name="Man J."/>
            <person name="Wang J."/>
            <person name="Zi X."/>
            <person name="Xia K."/>
            <person name="Tang B."/>
            <person name="Wei X."/>
            <person name="Zhang R."/>
        </authorList>
    </citation>
    <scope>VARIANTS CMT2Z ARG-400; ASN-466 AND ARG-798</scope>
    <scope>VARIANTS ASP-163 AND SER-209</scope>
</reference>
<reference key="28">
    <citation type="journal article" date="2016" name="Brain">
        <title>MORC2 mutation causes severe spinal muscular atrophy-phenotype, cerebellar atrophy, and diaphragmatic paralysis.</title>
        <authorList>
            <person name="Schottmann G."/>
            <person name="Wagner C."/>
            <person name="Seifert F."/>
            <person name="Stenzel W."/>
            <person name="Schuelke M."/>
        </authorList>
    </citation>
    <scope>VARIANT ARG-424</scope>
</reference>
<reference key="29">
    <citation type="journal article" date="2017" name="Brain">
        <title>De novo p.T362R mutation in MORC2 causes early onset cerebellar ataxia, axonal polyneuropathy and nocturnal hypoventilation.</title>
        <authorList>
            <person name="Zanni G."/>
            <person name="Nardella M."/>
            <person name="Barresi S."/>
            <person name="Bellacchio E."/>
            <person name="Niceta M."/>
            <person name="Ciolfi A."/>
            <person name="Pro S."/>
            <person name="D'Arrigo S."/>
            <person name="Tartaglia M."/>
            <person name="Bertini E."/>
        </authorList>
    </citation>
    <scope>VARIANT ARG-424</scope>
</reference>
<reference key="30">
    <citation type="journal article" date="2017" name="Eur. J. Neurol.">
        <title>Clinical and mutational spectrum of Charcot-Marie-Tooth disease type 2Z caused by MORC2 variants in Japan.</title>
        <authorList>
            <person name="Ando M."/>
            <person name="Okamoto Y."/>
            <person name="Yoshimura A."/>
            <person name="Yuan J.H."/>
            <person name="Hiramatsu Y."/>
            <person name="Higuchi Y."/>
            <person name="Hashiguchi A."/>
            <person name="Mitsui J."/>
            <person name="Ishiura H."/>
            <person name="Fukumura S."/>
            <person name="Matsushima M."/>
            <person name="Ochi N."/>
            <person name="Tsugawa J."/>
            <person name="Morishita S."/>
            <person name="Tsuji S."/>
            <person name="Takashima H."/>
        </authorList>
    </citation>
    <scope>VARIANTS CMT2Z TRP-252; CYS-394; ARG-400; TYR-407 AND VAL-431</scope>
    <scope>VARIANTS SER-209; MET-228 AND LYS-906</scope>
</reference>
<reference key="31">
    <citation type="journal article" date="2017" name="Nat. Genet.">
        <title>Hyperactivation of HUSH complex function by Charcot-Marie-Tooth disease mutation in MORC2.</title>
        <authorList>
            <person name="Tchasovnikarova I.A."/>
            <person name="Timms R.T."/>
            <person name="Douse C.H."/>
            <person name="Roberts R.C."/>
            <person name="Dougan G."/>
            <person name="Kingston R.E."/>
            <person name="Modis Y."/>
            <person name="Lehner P.J."/>
        </authorList>
    </citation>
    <scope>CHARACTERIZATION OF VARIANT CMT2Z TRP-252</scope>
    <scope>FUNCTION</scope>
    <scope>SUBCELLULAR LOCATION</scope>
    <scope>INTERACTION WITH TASOR AND MPHOSPH8</scope>
    <scope>MUTAGENESIS OF ASN-39 AND ASP-68</scope>
    <scope>CATALYTIC ACTIVITY</scope>
    <scope>DSDNA-BINDING</scope>
</reference>
<reference key="32">
    <citation type="journal article" date="2020" name="Am. J. Hum. Genet.">
        <title>De Novo Variants in the ATPase Module of MORC2 Cause a Neurodevelopmental Disorder with Growth Retardation and Variable Craniofacial Dysmorphism.</title>
        <authorList>
            <consortium name="Undiagnosed Diseases Network"/>
            <person name="Guillen Sacoto M.J."/>
            <person name="Tchasovnikarova I.A."/>
            <person name="Torti E."/>
            <person name="Forster C."/>
            <person name="Andrew E.H."/>
            <person name="Anselm I."/>
            <person name="Baranano K.W."/>
            <person name="Briere L.C."/>
            <person name="Cohen J.S."/>
            <person name="Craigen W.J."/>
            <person name="Cytrynbaum C."/>
            <person name="Ekhilevitch N."/>
            <person name="Elrick M.J."/>
            <person name="Fatemi A."/>
            <person name="Fraser J.L."/>
            <person name="Gallagher R.C."/>
            <person name="Guerin A."/>
            <person name="Haynes D."/>
            <person name="High F.A."/>
            <person name="Inglese C.N."/>
            <person name="Kiss C."/>
            <person name="Koenig M.K."/>
            <person name="Krier J."/>
            <person name="Lindstrom K."/>
            <person name="Marble M."/>
            <person name="Meddaugh H."/>
            <person name="Moran E.S."/>
            <person name="Morel C.F."/>
            <person name="Mu W."/>
            <person name="Muller E.A. II"/>
            <person name="Nance J."/>
            <person name="Natowicz M.R."/>
            <person name="Numis A.L."/>
            <person name="Ostrem B."/>
            <person name="Pappas J."/>
            <person name="Stafstrom C.E."/>
            <person name="Streff H."/>
            <person name="Sweetser D.A."/>
            <person name="Szybowska M."/>
            <person name="Walker M.A."/>
            <person name="Wang W."/>
            <person name="Weiss K."/>
            <person name="Weksberg R."/>
            <person name="Wheeler P.G."/>
            <person name="Yoon G."/>
            <person name="Kingston R.E."/>
            <person name="Juusola J."/>
        </authorList>
    </citation>
    <scope>INVOLVEMENT IN DIGFAN</scope>
    <scope>VARIANTS DIGFAN ILE-24; LYS-27; LEU-87; VAL-88; CYS-132; SER-266; ARG-388; CYS-394 AND PHE-413</scope>
    <scope>CHARACTERIZATION OF VARIANTS DIGFAN ILE-24; LYS-27; LEU-87; CYS-132; SER-266</scope>
    <scope>CHARACTERIZATION OF VARIANTS CMT2Z GLY-236; TRP-252</scope>
    <scope>FUNCTION</scope>
</reference>
<reference evidence="22 23 24" key="33">
    <citation type="journal article" date="2018" name="Nat. Commun.">
        <title>Neuropathic MORC2 mutations perturb GHKL ATPase dimerization dynamics and epigenetic silencing by multiple structural mechanisms.</title>
        <authorList>
            <person name="Douse C.H."/>
            <person name="Bloor S."/>
            <person name="Liu Y."/>
            <person name="Shamin M."/>
            <person name="Tchasovnikarova I.A."/>
            <person name="Timms R.T."/>
            <person name="Lehner P.J."/>
            <person name="Modis Y."/>
        </authorList>
    </citation>
    <scope>X-RAY CRYSTALLOGRAPHY (1.81 ANGSTROMS) OF 1-603 OF WILD-TYPE</scope>
    <scope>X-RAY CRYSTALLOGRAPHY (1.81 ANGSTROMS) OF 1-603 OF</scope>
    <scope>X-RAY CRYSTALLOGRAPHY (1.81 ANGSTROMS) OF 1-603 OF VARIANT CMT2Z LEU-87</scope>
    <scope>X-RAY CRYSTALLOGRAPHY (1.81 ANGSTROMS) OF 1-603 OF VARIANT ARG-424 IN COMPLEX WITH ATP; MAGNESIUM AND ZINC</scope>
    <scope>CHARACTERIZATION OF VARIANTS CMT2Z LEU-87 AND TRP-252</scope>
    <scope>CHARACTERIZATION OF VARIANT ARG-424</scope>
    <scope>FUNCTION</scope>
    <scope>CATALYTIC ACTIVITY</scope>
    <scope>SUBUNIT</scope>
    <scope>MUTAGENESIS OF TYR-18; ASN-39; ARG-266; ARG-319; ARG-326; ARG-329; ARG-333; ARG-344; ARG-351 AND ARG-358</scope>
</reference>
<proteinExistence type="evidence at protein level"/>
<organism>
    <name type="scientific">Homo sapiens</name>
    <name type="common">Human</name>
    <dbReference type="NCBI Taxonomy" id="9606"/>
    <lineage>
        <taxon>Eukaryota</taxon>
        <taxon>Metazoa</taxon>
        <taxon>Chordata</taxon>
        <taxon>Craniata</taxon>
        <taxon>Vertebrata</taxon>
        <taxon>Euteleostomi</taxon>
        <taxon>Mammalia</taxon>
        <taxon>Eutheria</taxon>
        <taxon>Euarchontoglires</taxon>
        <taxon>Primates</taxon>
        <taxon>Haplorrhini</taxon>
        <taxon>Catarrhini</taxon>
        <taxon>Hominidae</taxon>
        <taxon>Homo</taxon>
    </lineage>
</organism>